<name>EFTU_ACET2</name>
<comment type="function">
    <text evidence="2">GTP hydrolase that promotes the GTP-dependent binding of aminoacyl-tRNA to the A-site of ribosomes during protein biosynthesis.</text>
</comment>
<comment type="catalytic activity">
    <reaction evidence="2">
        <text>GTP + H2O = GDP + phosphate + H(+)</text>
        <dbReference type="Rhea" id="RHEA:19669"/>
        <dbReference type="ChEBI" id="CHEBI:15377"/>
        <dbReference type="ChEBI" id="CHEBI:15378"/>
        <dbReference type="ChEBI" id="CHEBI:37565"/>
        <dbReference type="ChEBI" id="CHEBI:43474"/>
        <dbReference type="ChEBI" id="CHEBI:58189"/>
        <dbReference type="EC" id="3.6.5.3"/>
    </reaction>
    <physiologicalReaction direction="left-to-right" evidence="2">
        <dbReference type="Rhea" id="RHEA:19670"/>
    </physiologicalReaction>
</comment>
<comment type="subunit">
    <text evidence="2">Monomer.</text>
</comment>
<comment type="subcellular location">
    <subcellularLocation>
        <location evidence="2">Cytoplasm</location>
    </subcellularLocation>
</comment>
<comment type="similarity">
    <text evidence="2">Belongs to the TRAFAC class translation factor GTPase superfamily. Classic translation factor GTPase family. EF-Tu/EF-1A subfamily.</text>
</comment>
<evidence type="ECO:0000250" key="1"/>
<evidence type="ECO:0000255" key="2">
    <source>
        <dbReference type="HAMAP-Rule" id="MF_00118"/>
    </source>
</evidence>
<organism>
    <name type="scientific">Acetivibrio thermocellus (strain ATCC 27405 / DSM 1237 / JCM 9322 / NBRC 103400 / NCIMB 10682 / NRRL B-4536 / VPI 7372)</name>
    <name type="common">Clostridium thermocellum</name>
    <dbReference type="NCBI Taxonomy" id="203119"/>
    <lineage>
        <taxon>Bacteria</taxon>
        <taxon>Bacillati</taxon>
        <taxon>Bacillota</taxon>
        <taxon>Clostridia</taxon>
        <taxon>Eubacteriales</taxon>
        <taxon>Oscillospiraceae</taxon>
        <taxon>Acetivibrio</taxon>
    </lineage>
</organism>
<gene>
    <name evidence="2" type="primary">tuf</name>
    <name type="ordered locus">Cthe_2730</name>
</gene>
<sequence length="400" mass="44188">MSKAKFERTKPHVNIGTIGHVDHGKTSLTAAITKVLGFQGKANYTSYENIDKAPEERERGITISTSHVEYETDNRHYAHVDCPGHADYVKNMITGAAQMDGAILVVSAADGPMPQTREHILLARQVGVPYIVVFLNKCDMVDDEELLELVEMEIRELLNTYEFPGDEIPIIRGSALAALESTATSVDAPEYQPILKLMEEVDKYIPTPQRDIDKPFAMPVEDVFTITGRGTVATGRVERGTLKMGDEVEIVGLSDSPKKTVVTGIEMFRKLLDQAVAGDNIGALLRGIQRNEVERGQVLAKPGSIKPHTYFEAQVYVLTKEEGGRHTPFFNNYRPQFYFRTTDVTGVVELPQGTEMVMPGDHITMKVKLITPVAMEEGLKFAIREGGRTVGAGNVSKIIE</sequence>
<proteinExistence type="inferred from homology"/>
<dbReference type="EC" id="3.6.5.3" evidence="2"/>
<dbReference type="EMBL" id="CP000568">
    <property type="protein sequence ID" value="ABN53929.1"/>
    <property type="molecule type" value="Genomic_DNA"/>
</dbReference>
<dbReference type="RefSeq" id="WP_020457902.1">
    <property type="nucleotide sequence ID" value="NC_009012.1"/>
</dbReference>
<dbReference type="SMR" id="A3DJ00"/>
<dbReference type="STRING" id="203119.Cthe_2730"/>
<dbReference type="GeneID" id="35804930"/>
<dbReference type="KEGG" id="cth:Cthe_2730"/>
<dbReference type="eggNOG" id="COG0050">
    <property type="taxonomic scope" value="Bacteria"/>
</dbReference>
<dbReference type="HOGENOM" id="CLU_007265_0_1_9"/>
<dbReference type="OrthoDB" id="9804504at2"/>
<dbReference type="Proteomes" id="UP000002145">
    <property type="component" value="Chromosome"/>
</dbReference>
<dbReference type="GO" id="GO:0005829">
    <property type="term" value="C:cytosol"/>
    <property type="evidence" value="ECO:0007669"/>
    <property type="project" value="TreeGrafter"/>
</dbReference>
<dbReference type="GO" id="GO:0005525">
    <property type="term" value="F:GTP binding"/>
    <property type="evidence" value="ECO:0007669"/>
    <property type="project" value="UniProtKB-UniRule"/>
</dbReference>
<dbReference type="GO" id="GO:0003924">
    <property type="term" value="F:GTPase activity"/>
    <property type="evidence" value="ECO:0007669"/>
    <property type="project" value="InterPro"/>
</dbReference>
<dbReference type="GO" id="GO:0003746">
    <property type="term" value="F:translation elongation factor activity"/>
    <property type="evidence" value="ECO:0007669"/>
    <property type="project" value="UniProtKB-UniRule"/>
</dbReference>
<dbReference type="CDD" id="cd01884">
    <property type="entry name" value="EF_Tu"/>
    <property type="match status" value="1"/>
</dbReference>
<dbReference type="CDD" id="cd03697">
    <property type="entry name" value="EFTU_II"/>
    <property type="match status" value="1"/>
</dbReference>
<dbReference type="CDD" id="cd03707">
    <property type="entry name" value="EFTU_III"/>
    <property type="match status" value="1"/>
</dbReference>
<dbReference type="FunFam" id="2.40.30.10:FF:000001">
    <property type="entry name" value="Elongation factor Tu"/>
    <property type="match status" value="1"/>
</dbReference>
<dbReference type="FunFam" id="3.40.50.300:FF:000003">
    <property type="entry name" value="Elongation factor Tu"/>
    <property type="match status" value="1"/>
</dbReference>
<dbReference type="Gene3D" id="3.40.50.300">
    <property type="entry name" value="P-loop containing nucleotide triphosphate hydrolases"/>
    <property type="match status" value="1"/>
</dbReference>
<dbReference type="Gene3D" id="2.40.30.10">
    <property type="entry name" value="Translation factors"/>
    <property type="match status" value="2"/>
</dbReference>
<dbReference type="HAMAP" id="MF_00118_B">
    <property type="entry name" value="EF_Tu_B"/>
    <property type="match status" value="1"/>
</dbReference>
<dbReference type="InterPro" id="IPR041709">
    <property type="entry name" value="EF-Tu_GTP-bd"/>
</dbReference>
<dbReference type="InterPro" id="IPR050055">
    <property type="entry name" value="EF-Tu_GTPase"/>
</dbReference>
<dbReference type="InterPro" id="IPR004161">
    <property type="entry name" value="EFTu-like_2"/>
</dbReference>
<dbReference type="InterPro" id="IPR033720">
    <property type="entry name" value="EFTU_2"/>
</dbReference>
<dbReference type="InterPro" id="IPR031157">
    <property type="entry name" value="G_TR_CS"/>
</dbReference>
<dbReference type="InterPro" id="IPR027417">
    <property type="entry name" value="P-loop_NTPase"/>
</dbReference>
<dbReference type="InterPro" id="IPR005225">
    <property type="entry name" value="Small_GTP-bd"/>
</dbReference>
<dbReference type="InterPro" id="IPR000795">
    <property type="entry name" value="T_Tr_GTP-bd_dom"/>
</dbReference>
<dbReference type="InterPro" id="IPR009000">
    <property type="entry name" value="Transl_B-barrel_sf"/>
</dbReference>
<dbReference type="InterPro" id="IPR009001">
    <property type="entry name" value="Transl_elong_EF1A/Init_IF2_C"/>
</dbReference>
<dbReference type="InterPro" id="IPR004541">
    <property type="entry name" value="Transl_elong_EFTu/EF1A_bac/org"/>
</dbReference>
<dbReference type="InterPro" id="IPR004160">
    <property type="entry name" value="Transl_elong_EFTu/EF1A_C"/>
</dbReference>
<dbReference type="NCBIfam" id="TIGR00485">
    <property type="entry name" value="EF-Tu"/>
    <property type="match status" value="1"/>
</dbReference>
<dbReference type="NCBIfam" id="NF000766">
    <property type="entry name" value="PRK00049.1"/>
    <property type="match status" value="1"/>
</dbReference>
<dbReference type="NCBIfam" id="NF009372">
    <property type="entry name" value="PRK12735.1"/>
    <property type="match status" value="1"/>
</dbReference>
<dbReference type="NCBIfam" id="NF009373">
    <property type="entry name" value="PRK12736.1"/>
    <property type="match status" value="1"/>
</dbReference>
<dbReference type="NCBIfam" id="TIGR00231">
    <property type="entry name" value="small_GTP"/>
    <property type="match status" value="1"/>
</dbReference>
<dbReference type="PANTHER" id="PTHR43721:SF22">
    <property type="entry name" value="ELONGATION FACTOR TU, MITOCHONDRIAL"/>
    <property type="match status" value="1"/>
</dbReference>
<dbReference type="PANTHER" id="PTHR43721">
    <property type="entry name" value="ELONGATION FACTOR TU-RELATED"/>
    <property type="match status" value="1"/>
</dbReference>
<dbReference type="Pfam" id="PF00009">
    <property type="entry name" value="GTP_EFTU"/>
    <property type="match status" value="1"/>
</dbReference>
<dbReference type="Pfam" id="PF03144">
    <property type="entry name" value="GTP_EFTU_D2"/>
    <property type="match status" value="1"/>
</dbReference>
<dbReference type="Pfam" id="PF03143">
    <property type="entry name" value="GTP_EFTU_D3"/>
    <property type="match status" value="1"/>
</dbReference>
<dbReference type="PRINTS" id="PR00315">
    <property type="entry name" value="ELONGATNFCT"/>
</dbReference>
<dbReference type="SUPFAM" id="SSF50465">
    <property type="entry name" value="EF-Tu/eEF-1alpha/eIF2-gamma C-terminal domain"/>
    <property type="match status" value="1"/>
</dbReference>
<dbReference type="SUPFAM" id="SSF52540">
    <property type="entry name" value="P-loop containing nucleoside triphosphate hydrolases"/>
    <property type="match status" value="1"/>
</dbReference>
<dbReference type="SUPFAM" id="SSF50447">
    <property type="entry name" value="Translation proteins"/>
    <property type="match status" value="1"/>
</dbReference>
<dbReference type="PROSITE" id="PS00301">
    <property type="entry name" value="G_TR_1"/>
    <property type="match status" value="1"/>
</dbReference>
<dbReference type="PROSITE" id="PS51722">
    <property type="entry name" value="G_TR_2"/>
    <property type="match status" value="1"/>
</dbReference>
<feature type="chain" id="PRO_1000015640" description="Elongation factor Tu">
    <location>
        <begin position="1"/>
        <end position="400"/>
    </location>
</feature>
<feature type="domain" description="tr-type G">
    <location>
        <begin position="10"/>
        <end position="209"/>
    </location>
</feature>
<feature type="region of interest" description="G1" evidence="1">
    <location>
        <begin position="19"/>
        <end position="26"/>
    </location>
</feature>
<feature type="region of interest" description="G2" evidence="1">
    <location>
        <begin position="60"/>
        <end position="64"/>
    </location>
</feature>
<feature type="region of interest" description="G3" evidence="1">
    <location>
        <begin position="81"/>
        <end position="84"/>
    </location>
</feature>
<feature type="region of interest" description="G4" evidence="1">
    <location>
        <begin position="136"/>
        <end position="139"/>
    </location>
</feature>
<feature type="region of interest" description="G5" evidence="1">
    <location>
        <begin position="174"/>
        <end position="176"/>
    </location>
</feature>
<feature type="binding site" evidence="2">
    <location>
        <begin position="19"/>
        <end position="26"/>
    </location>
    <ligand>
        <name>GTP</name>
        <dbReference type="ChEBI" id="CHEBI:37565"/>
    </ligand>
</feature>
<feature type="binding site" evidence="2">
    <location>
        <position position="26"/>
    </location>
    <ligand>
        <name>Mg(2+)</name>
        <dbReference type="ChEBI" id="CHEBI:18420"/>
    </ligand>
</feature>
<feature type="binding site" evidence="2">
    <location>
        <begin position="81"/>
        <end position="85"/>
    </location>
    <ligand>
        <name>GTP</name>
        <dbReference type="ChEBI" id="CHEBI:37565"/>
    </ligand>
</feature>
<feature type="binding site" evidence="2">
    <location>
        <begin position="136"/>
        <end position="139"/>
    </location>
    <ligand>
        <name>GTP</name>
        <dbReference type="ChEBI" id="CHEBI:37565"/>
    </ligand>
</feature>
<reference key="1">
    <citation type="submission" date="2007-02" db="EMBL/GenBank/DDBJ databases">
        <title>Complete sequence of Clostridium thermocellum ATCC 27405.</title>
        <authorList>
            <consortium name="US DOE Joint Genome Institute"/>
            <person name="Copeland A."/>
            <person name="Lucas S."/>
            <person name="Lapidus A."/>
            <person name="Barry K."/>
            <person name="Detter J.C."/>
            <person name="Glavina del Rio T."/>
            <person name="Hammon N."/>
            <person name="Israni S."/>
            <person name="Dalin E."/>
            <person name="Tice H."/>
            <person name="Pitluck S."/>
            <person name="Chertkov O."/>
            <person name="Brettin T."/>
            <person name="Bruce D."/>
            <person name="Han C."/>
            <person name="Tapia R."/>
            <person name="Gilna P."/>
            <person name="Schmutz J."/>
            <person name="Larimer F."/>
            <person name="Land M."/>
            <person name="Hauser L."/>
            <person name="Kyrpides N."/>
            <person name="Mikhailova N."/>
            <person name="Wu J.H.D."/>
            <person name="Newcomb M."/>
            <person name="Richardson P."/>
        </authorList>
    </citation>
    <scope>NUCLEOTIDE SEQUENCE [LARGE SCALE GENOMIC DNA]</scope>
    <source>
        <strain>ATCC 27405 / DSM 1237 / JCM 9322 / NBRC 103400 / NCIMB 10682 / NRRL B-4536 / VPI 7372</strain>
    </source>
</reference>
<protein>
    <recommendedName>
        <fullName evidence="2">Elongation factor Tu</fullName>
        <shortName evidence="2">EF-Tu</shortName>
        <ecNumber evidence="2">3.6.5.3</ecNumber>
    </recommendedName>
</protein>
<accession>A3DJ00</accession>
<keyword id="KW-0963">Cytoplasm</keyword>
<keyword id="KW-0251">Elongation factor</keyword>
<keyword id="KW-0342">GTP-binding</keyword>
<keyword id="KW-0378">Hydrolase</keyword>
<keyword id="KW-0460">Magnesium</keyword>
<keyword id="KW-0479">Metal-binding</keyword>
<keyword id="KW-0547">Nucleotide-binding</keyword>
<keyword id="KW-0648">Protein biosynthesis</keyword>
<keyword id="KW-1185">Reference proteome</keyword>